<feature type="chain" id="PRO_0000188036" description="Acyl-[acyl-carrier-protein]--UDP-N-acetylglucosamine O-acyltransferase">
    <location>
        <begin position="1"/>
        <end position="278"/>
    </location>
</feature>
<protein>
    <recommendedName>
        <fullName evidence="1">Acyl-[acyl-carrier-protein]--UDP-N-acetylglucosamine O-acyltransferase</fullName>
        <shortName evidence="1">UDP-N-acetylglucosamine acyltransferase</shortName>
        <ecNumber evidence="1">2.3.1.129</ecNumber>
    </recommendedName>
</protein>
<dbReference type="EC" id="2.3.1.129" evidence="1"/>
<dbReference type="EMBL" id="AE008917">
    <property type="protein sequence ID" value="AAL52014.1"/>
    <property type="status" value="ALT_INIT"/>
    <property type="molecule type" value="Genomic_DNA"/>
</dbReference>
<dbReference type="PIR" id="AC3356">
    <property type="entry name" value="AC3356"/>
</dbReference>
<dbReference type="RefSeq" id="WP_002964279.1">
    <property type="nucleotide sequence ID" value="NZ_GG703780.1"/>
</dbReference>
<dbReference type="SMR" id="P65320"/>
<dbReference type="GeneID" id="97533598"/>
<dbReference type="KEGG" id="bme:BMEI0833"/>
<dbReference type="KEGG" id="bmel:DK63_587"/>
<dbReference type="PATRIC" id="fig|224914.52.peg.612"/>
<dbReference type="eggNOG" id="COG1043">
    <property type="taxonomic scope" value="Bacteria"/>
</dbReference>
<dbReference type="PhylomeDB" id="P65320"/>
<dbReference type="UniPathway" id="UPA00359">
    <property type="reaction ID" value="UER00477"/>
</dbReference>
<dbReference type="Proteomes" id="UP000000419">
    <property type="component" value="Chromosome I"/>
</dbReference>
<dbReference type="GO" id="GO:0005737">
    <property type="term" value="C:cytoplasm"/>
    <property type="evidence" value="ECO:0007669"/>
    <property type="project" value="UniProtKB-SubCell"/>
</dbReference>
<dbReference type="GO" id="GO:0016020">
    <property type="term" value="C:membrane"/>
    <property type="evidence" value="ECO:0007669"/>
    <property type="project" value="GOC"/>
</dbReference>
<dbReference type="GO" id="GO:0008780">
    <property type="term" value="F:acyl-[acyl-carrier-protein]-UDP-N-acetylglucosamine O-acyltransferase activity"/>
    <property type="evidence" value="ECO:0007669"/>
    <property type="project" value="UniProtKB-UniRule"/>
</dbReference>
<dbReference type="GO" id="GO:0009245">
    <property type="term" value="P:lipid A biosynthetic process"/>
    <property type="evidence" value="ECO:0007669"/>
    <property type="project" value="UniProtKB-UniRule"/>
</dbReference>
<dbReference type="CDD" id="cd03351">
    <property type="entry name" value="LbH_UDP-GlcNAc_AT"/>
    <property type="match status" value="1"/>
</dbReference>
<dbReference type="Gene3D" id="2.160.10.10">
    <property type="entry name" value="Hexapeptide repeat proteins"/>
    <property type="match status" value="1"/>
</dbReference>
<dbReference type="Gene3D" id="1.20.1180.10">
    <property type="entry name" value="Udp N-acetylglucosamine O-acyltransferase, C-terminal domain"/>
    <property type="match status" value="1"/>
</dbReference>
<dbReference type="HAMAP" id="MF_00387">
    <property type="entry name" value="LpxA"/>
    <property type="match status" value="1"/>
</dbReference>
<dbReference type="InterPro" id="IPR029098">
    <property type="entry name" value="Acetyltransf_C"/>
</dbReference>
<dbReference type="InterPro" id="IPR037157">
    <property type="entry name" value="Acetyltransf_C_sf"/>
</dbReference>
<dbReference type="InterPro" id="IPR001451">
    <property type="entry name" value="Hexapep"/>
</dbReference>
<dbReference type="InterPro" id="IPR018357">
    <property type="entry name" value="Hexapep_transf_CS"/>
</dbReference>
<dbReference type="InterPro" id="IPR010137">
    <property type="entry name" value="Lipid_A_LpxA"/>
</dbReference>
<dbReference type="InterPro" id="IPR011004">
    <property type="entry name" value="Trimer_LpxA-like_sf"/>
</dbReference>
<dbReference type="NCBIfam" id="TIGR01852">
    <property type="entry name" value="lipid_A_lpxA"/>
    <property type="match status" value="1"/>
</dbReference>
<dbReference type="NCBIfam" id="NF003657">
    <property type="entry name" value="PRK05289.1"/>
    <property type="match status" value="1"/>
</dbReference>
<dbReference type="PANTHER" id="PTHR43480">
    <property type="entry name" value="ACYL-[ACYL-CARRIER-PROTEIN]--UDP-N-ACETYLGLUCOSAMINE O-ACYLTRANSFERASE"/>
    <property type="match status" value="1"/>
</dbReference>
<dbReference type="PANTHER" id="PTHR43480:SF1">
    <property type="entry name" value="ACYL-[ACYL-CARRIER-PROTEIN]--UDP-N-ACETYLGLUCOSAMINE O-ACYLTRANSFERASE, MITOCHONDRIAL-RELATED"/>
    <property type="match status" value="1"/>
</dbReference>
<dbReference type="Pfam" id="PF13720">
    <property type="entry name" value="Acetyltransf_11"/>
    <property type="match status" value="1"/>
</dbReference>
<dbReference type="Pfam" id="PF00132">
    <property type="entry name" value="Hexapep"/>
    <property type="match status" value="2"/>
</dbReference>
<dbReference type="PIRSF" id="PIRSF000456">
    <property type="entry name" value="UDP-GlcNAc_acltr"/>
    <property type="match status" value="1"/>
</dbReference>
<dbReference type="SUPFAM" id="SSF51161">
    <property type="entry name" value="Trimeric LpxA-like enzymes"/>
    <property type="match status" value="1"/>
</dbReference>
<dbReference type="PROSITE" id="PS00101">
    <property type="entry name" value="HEXAPEP_TRANSFERASES"/>
    <property type="match status" value="1"/>
</dbReference>
<comment type="function">
    <text evidence="1">Involved in the biosynthesis of lipid A, a phosphorylated glycolipid that anchors the lipopolysaccharide to the outer membrane of the cell.</text>
</comment>
<comment type="catalytic activity">
    <reaction evidence="1">
        <text>a (3R)-hydroxyacyl-[ACP] + UDP-N-acetyl-alpha-D-glucosamine = a UDP-3-O-[(3R)-3-hydroxyacyl]-N-acetyl-alpha-D-glucosamine + holo-[ACP]</text>
        <dbReference type="Rhea" id="RHEA:67812"/>
        <dbReference type="Rhea" id="RHEA-COMP:9685"/>
        <dbReference type="Rhea" id="RHEA-COMP:9945"/>
        <dbReference type="ChEBI" id="CHEBI:57705"/>
        <dbReference type="ChEBI" id="CHEBI:64479"/>
        <dbReference type="ChEBI" id="CHEBI:78827"/>
        <dbReference type="ChEBI" id="CHEBI:173225"/>
        <dbReference type="EC" id="2.3.1.129"/>
    </reaction>
</comment>
<comment type="pathway">
    <text evidence="1">Glycolipid biosynthesis; lipid IV(A) biosynthesis; lipid IV(A) from (3R)-3-hydroxytetradecanoyl-[acyl-carrier-protein] and UDP-N-acetyl-alpha-D-glucosamine: step 1/6.</text>
</comment>
<comment type="subunit">
    <text evidence="1">Homotrimer.</text>
</comment>
<comment type="subcellular location">
    <subcellularLocation>
        <location evidence="1">Cytoplasm</location>
    </subcellularLocation>
</comment>
<comment type="similarity">
    <text evidence="1">Belongs to the transferase hexapeptide repeat family. LpxA subfamily.</text>
</comment>
<comment type="sequence caution" evidence="2">
    <conflict type="erroneous initiation">
        <sequence resource="EMBL-CDS" id="AAL52014"/>
    </conflict>
</comment>
<organism>
    <name type="scientific">Brucella melitensis biotype 1 (strain ATCC 23456 / CCUG 17765 / NCTC 10094 / 16M)</name>
    <dbReference type="NCBI Taxonomy" id="224914"/>
    <lineage>
        <taxon>Bacteria</taxon>
        <taxon>Pseudomonadati</taxon>
        <taxon>Pseudomonadota</taxon>
        <taxon>Alphaproteobacteria</taxon>
        <taxon>Hyphomicrobiales</taxon>
        <taxon>Brucellaceae</taxon>
        <taxon>Brucella/Ochrobactrum group</taxon>
        <taxon>Brucella</taxon>
    </lineage>
</organism>
<sequence>MKETFIHPTALVEPGVELGQGVSVGPFCHVQSGAIIGNDCELMSHVVITGATTLGAGTKVYPHAILGCDPQNNKHKGGPTRLNVGVNCIIREGVTMHKGSDNARGYTSIGDNCSFLAYAHVAHDCDIGDYVTFSNNVMIGGHTSIGHHAILGGGAAVHQFVRVGHHAFIGGLAAVVSDLIPYGMAIGVHAHLGGLNIIGMKRSGMERKEIHNLRHAVRMLFDRTKPIRQRAQDVLAAIPDSPTVSDMISFINVDTKRAYCTPPLDAAHGGAGHDSDED</sequence>
<proteinExistence type="inferred from homology"/>
<evidence type="ECO:0000255" key="1">
    <source>
        <dbReference type="HAMAP-Rule" id="MF_00387"/>
    </source>
</evidence>
<evidence type="ECO:0000305" key="2"/>
<reference key="1">
    <citation type="journal article" date="2002" name="Proc. Natl. Acad. Sci. U.S.A.">
        <title>The genome sequence of the facultative intracellular pathogen Brucella melitensis.</title>
        <authorList>
            <person name="DelVecchio V.G."/>
            <person name="Kapatral V."/>
            <person name="Redkar R.J."/>
            <person name="Patra G."/>
            <person name="Mujer C."/>
            <person name="Los T."/>
            <person name="Ivanova N."/>
            <person name="Anderson I."/>
            <person name="Bhattacharyya A."/>
            <person name="Lykidis A."/>
            <person name="Reznik G."/>
            <person name="Jablonski L."/>
            <person name="Larsen N."/>
            <person name="D'Souza M."/>
            <person name="Bernal A."/>
            <person name="Mazur M."/>
            <person name="Goltsman E."/>
            <person name="Selkov E."/>
            <person name="Elzer P.H."/>
            <person name="Hagius S."/>
            <person name="O'Callaghan D."/>
            <person name="Letesson J.-J."/>
            <person name="Haselkorn R."/>
            <person name="Kyrpides N.C."/>
            <person name="Overbeek R."/>
        </authorList>
    </citation>
    <scope>NUCLEOTIDE SEQUENCE [LARGE SCALE GENOMIC DNA]</scope>
    <source>
        <strain>ATCC 23456 / CCUG 17765 / NCTC 10094 / 16M</strain>
    </source>
</reference>
<accession>P65320</accession>
<accession>Q8YHG8</accession>
<keyword id="KW-0012">Acyltransferase</keyword>
<keyword id="KW-0963">Cytoplasm</keyword>
<keyword id="KW-0441">Lipid A biosynthesis</keyword>
<keyword id="KW-0444">Lipid biosynthesis</keyword>
<keyword id="KW-0443">Lipid metabolism</keyword>
<keyword id="KW-0677">Repeat</keyword>
<keyword id="KW-0808">Transferase</keyword>
<name>LPXA_BRUME</name>
<gene>
    <name evidence="1" type="primary">lpxA</name>
    <name type="ordered locus">BMEI0833</name>
</gene>